<feature type="chain" id="PRO_0000189117" description="1-deoxy-D-xylulose-5-phosphate synthase">
    <location>
        <begin position="1"/>
        <end position="625"/>
    </location>
</feature>
<feature type="binding site" evidence="1">
    <location>
        <position position="80"/>
    </location>
    <ligand>
        <name>thiamine diphosphate</name>
        <dbReference type="ChEBI" id="CHEBI:58937"/>
    </ligand>
</feature>
<feature type="binding site" evidence="1">
    <location>
        <begin position="121"/>
        <end position="123"/>
    </location>
    <ligand>
        <name>thiamine diphosphate</name>
        <dbReference type="ChEBI" id="CHEBI:58937"/>
    </ligand>
</feature>
<feature type="binding site" evidence="1">
    <location>
        <position position="152"/>
    </location>
    <ligand>
        <name>Mg(2+)</name>
        <dbReference type="ChEBI" id="CHEBI:18420"/>
    </ligand>
</feature>
<feature type="binding site" evidence="1">
    <location>
        <begin position="153"/>
        <end position="154"/>
    </location>
    <ligand>
        <name>thiamine diphosphate</name>
        <dbReference type="ChEBI" id="CHEBI:58937"/>
    </ligand>
</feature>
<feature type="binding site" evidence="1">
    <location>
        <position position="181"/>
    </location>
    <ligand>
        <name>Mg(2+)</name>
        <dbReference type="ChEBI" id="CHEBI:18420"/>
    </ligand>
</feature>
<feature type="binding site" evidence="1">
    <location>
        <position position="181"/>
    </location>
    <ligand>
        <name>thiamine diphosphate</name>
        <dbReference type="ChEBI" id="CHEBI:58937"/>
    </ligand>
</feature>
<feature type="binding site" evidence="1">
    <location>
        <position position="290"/>
    </location>
    <ligand>
        <name>thiamine diphosphate</name>
        <dbReference type="ChEBI" id="CHEBI:58937"/>
    </ligand>
</feature>
<feature type="binding site" evidence="1">
    <location>
        <position position="371"/>
    </location>
    <ligand>
        <name>thiamine diphosphate</name>
        <dbReference type="ChEBI" id="CHEBI:58937"/>
    </ligand>
</feature>
<evidence type="ECO:0000255" key="1">
    <source>
        <dbReference type="HAMAP-Rule" id="MF_00315"/>
    </source>
</evidence>
<proteinExistence type="inferred from homology"/>
<organism>
    <name type="scientific">Haemophilus influenzae (strain ATCC 51907 / DSM 11121 / KW20 / Rd)</name>
    <dbReference type="NCBI Taxonomy" id="71421"/>
    <lineage>
        <taxon>Bacteria</taxon>
        <taxon>Pseudomonadati</taxon>
        <taxon>Pseudomonadota</taxon>
        <taxon>Gammaproteobacteria</taxon>
        <taxon>Pasteurellales</taxon>
        <taxon>Pasteurellaceae</taxon>
        <taxon>Haemophilus</taxon>
    </lineage>
</organism>
<protein>
    <recommendedName>
        <fullName evidence="1">1-deoxy-D-xylulose-5-phosphate synthase</fullName>
        <ecNumber evidence="1">2.2.1.7</ecNumber>
    </recommendedName>
    <alternativeName>
        <fullName evidence="1">1-deoxyxylulose-5-phosphate synthase</fullName>
        <shortName evidence="1">DXP synthase</shortName>
        <shortName evidence="1">DXPS</shortName>
    </alternativeName>
</protein>
<sequence>MTNNMNNYPLLSLINSPEDLRLLNKDQLPQLCQELRAYLLESVSQTSGHLASGLGTVELTVALHYVYKTPFDQLIWDVGHQAYPHKILTGRREQMSTIRQKDGIHPFPWREESEFDVLSVGHSSTSISAGLGIAVAAERENAGRKTVCVIGDGAITAGMAFEALNHAGALHTDMLVILNDNEMSISENVGALNNHLARIFSGSLYSTLRDGSKKILDKVPPIKNFMKKTEEHMKGVMFSPESTLFEELGFNYIGPVDGHNIDELVATLTNMRNLKGPQFLHIKTKKGKGYAPAEKDPIGFHGVPKFDPISGELPKNNSKPTYSKIFGDWLCEMAEKDAKIIGITPAMREGSGMVEFSQRFPKQYFDVAIAEQHAVTFATGLAIGGYKPVVAIYSTFLQRAYDQLIHDVAIQNLPVLFAIDRAGIVGADGATHQGAFDISFMRCIPNMIIMTPSDENECRQMLYTGYQCGKPAAVRYPRGNAVGVKLTPLEMLPIGKSRLIRKGQKIAILNFGTLLPSALELSEKLNATVVDMRFVKPIDIEMINVLAQTHDYLVTLEENAIQGGAGSAVAEVLNSSGKSTALLQLGLPDYFIPQATQQEALADLGLDTKGIEEKILNFIAKQGNL</sequence>
<reference key="1">
    <citation type="journal article" date="1995" name="Science">
        <title>Whole-genome random sequencing and assembly of Haemophilus influenzae Rd.</title>
        <authorList>
            <person name="Fleischmann R.D."/>
            <person name="Adams M.D."/>
            <person name="White O."/>
            <person name="Clayton R.A."/>
            <person name="Kirkness E.F."/>
            <person name="Kerlavage A.R."/>
            <person name="Bult C.J."/>
            <person name="Tomb J.-F."/>
            <person name="Dougherty B.A."/>
            <person name="Merrick J.M."/>
            <person name="McKenney K."/>
            <person name="Sutton G.G."/>
            <person name="FitzHugh W."/>
            <person name="Fields C.A."/>
            <person name="Gocayne J.D."/>
            <person name="Scott J.D."/>
            <person name="Shirley R."/>
            <person name="Liu L.-I."/>
            <person name="Glodek A."/>
            <person name="Kelley J.M."/>
            <person name="Weidman J.F."/>
            <person name="Phillips C.A."/>
            <person name="Spriggs T."/>
            <person name="Hedblom E."/>
            <person name="Cotton M.D."/>
            <person name="Utterback T.R."/>
            <person name="Hanna M.C."/>
            <person name="Nguyen D.T."/>
            <person name="Saudek D.M."/>
            <person name="Brandon R.C."/>
            <person name="Fine L.D."/>
            <person name="Fritchman J.L."/>
            <person name="Fuhrmann J.L."/>
            <person name="Geoghagen N.S.M."/>
            <person name="Gnehm C.L."/>
            <person name="McDonald L.A."/>
            <person name="Small K.V."/>
            <person name="Fraser C.M."/>
            <person name="Smith H.O."/>
            <person name="Venter J.C."/>
        </authorList>
    </citation>
    <scope>NUCLEOTIDE SEQUENCE [LARGE SCALE GENOMIC DNA]</scope>
    <source>
        <strain>ATCC 51907 / DSM 11121 / KW20 / Rd</strain>
    </source>
</reference>
<accession>P45205</accession>
<gene>
    <name evidence="1" type="primary">dxs</name>
    <name type="ordered locus">HI_1439</name>
</gene>
<comment type="function">
    <text evidence="1">Catalyzes the acyloin condensation reaction between C atoms 2 and 3 of pyruvate and glyceraldehyde 3-phosphate to yield 1-deoxy-D-xylulose-5-phosphate (DXP).</text>
</comment>
<comment type="catalytic activity">
    <reaction evidence="1">
        <text>D-glyceraldehyde 3-phosphate + pyruvate + H(+) = 1-deoxy-D-xylulose 5-phosphate + CO2</text>
        <dbReference type="Rhea" id="RHEA:12605"/>
        <dbReference type="ChEBI" id="CHEBI:15361"/>
        <dbReference type="ChEBI" id="CHEBI:15378"/>
        <dbReference type="ChEBI" id="CHEBI:16526"/>
        <dbReference type="ChEBI" id="CHEBI:57792"/>
        <dbReference type="ChEBI" id="CHEBI:59776"/>
        <dbReference type="EC" id="2.2.1.7"/>
    </reaction>
</comment>
<comment type="cofactor">
    <cofactor evidence="1">
        <name>Mg(2+)</name>
        <dbReference type="ChEBI" id="CHEBI:18420"/>
    </cofactor>
    <text evidence="1">Binds 1 Mg(2+) ion per subunit.</text>
</comment>
<comment type="cofactor">
    <cofactor evidence="1">
        <name>thiamine diphosphate</name>
        <dbReference type="ChEBI" id="CHEBI:58937"/>
    </cofactor>
    <text evidence="1">Binds 1 thiamine pyrophosphate per subunit.</text>
</comment>
<comment type="pathway">
    <text evidence="1">Metabolic intermediate biosynthesis; 1-deoxy-D-xylulose 5-phosphate biosynthesis; 1-deoxy-D-xylulose 5-phosphate from D-glyceraldehyde 3-phosphate and pyruvate: step 1/1.</text>
</comment>
<comment type="subunit">
    <text evidence="1">Homodimer.</text>
</comment>
<comment type="similarity">
    <text evidence="1">Belongs to the transketolase family. DXPS subfamily.</text>
</comment>
<dbReference type="EC" id="2.2.1.7" evidence="1"/>
<dbReference type="EMBL" id="L42023">
    <property type="protein sequence ID" value="AAC23088.1"/>
    <property type="molecule type" value="Genomic_DNA"/>
</dbReference>
<dbReference type="PIR" id="B64172">
    <property type="entry name" value="B64172"/>
</dbReference>
<dbReference type="RefSeq" id="NP_439591.1">
    <property type="nucleotide sequence ID" value="NC_000907.1"/>
</dbReference>
<dbReference type="SMR" id="P45205"/>
<dbReference type="STRING" id="71421.HI_1439"/>
<dbReference type="EnsemblBacteria" id="AAC23088">
    <property type="protein sequence ID" value="AAC23088"/>
    <property type="gene ID" value="HI_1439"/>
</dbReference>
<dbReference type="KEGG" id="hin:HI_1439"/>
<dbReference type="PATRIC" id="fig|71421.8.peg.1501"/>
<dbReference type="eggNOG" id="COG1154">
    <property type="taxonomic scope" value="Bacteria"/>
</dbReference>
<dbReference type="HOGENOM" id="CLU_009227_1_4_6"/>
<dbReference type="OrthoDB" id="9803371at2"/>
<dbReference type="PhylomeDB" id="P45205"/>
<dbReference type="BioCyc" id="HINF71421:G1GJ1-1465-MONOMER"/>
<dbReference type="UniPathway" id="UPA00064">
    <property type="reaction ID" value="UER00091"/>
</dbReference>
<dbReference type="Proteomes" id="UP000000579">
    <property type="component" value="Chromosome"/>
</dbReference>
<dbReference type="GO" id="GO:0005829">
    <property type="term" value="C:cytosol"/>
    <property type="evidence" value="ECO:0000318"/>
    <property type="project" value="GO_Central"/>
</dbReference>
<dbReference type="GO" id="GO:0008661">
    <property type="term" value="F:1-deoxy-D-xylulose-5-phosphate synthase activity"/>
    <property type="evidence" value="ECO:0000318"/>
    <property type="project" value="GO_Central"/>
</dbReference>
<dbReference type="GO" id="GO:0000287">
    <property type="term" value="F:magnesium ion binding"/>
    <property type="evidence" value="ECO:0007669"/>
    <property type="project" value="UniProtKB-UniRule"/>
</dbReference>
<dbReference type="GO" id="GO:0030976">
    <property type="term" value="F:thiamine pyrophosphate binding"/>
    <property type="evidence" value="ECO:0007669"/>
    <property type="project" value="UniProtKB-UniRule"/>
</dbReference>
<dbReference type="GO" id="GO:0052865">
    <property type="term" value="P:1-deoxy-D-xylulose 5-phosphate biosynthetic process"/>
    <property type="evidence" value="ECO:0007669"/>
    <property type="project" value="UniProtKB-UniPathway"/>
</dbReference>
<dbReference type="GO" id="GO:0019288">
    <property type="term" value="P:isopentenyl diphosphate biosynthetic process, methylerythritol 4-phosphate pathway"/>
    <property type="evidence" value="ECO:0000318"/>
    <property type="project" value="GO_Central"/>
</dbReference>
<dbReference type="GO" id="GO:0016114">
    <property type="term" value="P:terpenoid biosynthetic process"/>
    <property type="evidence" value="ECO:0007669"/>
    <property type="project" value="UniProtKB-UniRule"/>
</dbReference>
<dbReference type="GO" id="GO:0009228">
    <property type="term" value="P:thiamine biosynthetic process"/>
    <property type="evidence" value="ECO:0007669"/>
    <property type="project" value="UniProtKB-UniRule"/>
</dbReference>
<dbReference type="CDD" id="cd02007">
    <property type="entry name" value="TPP_DXS"/>
    <property type="match status" value="1"/>
</dbReference>
<dbReference type="CDD" id="cd07033">
    <property type="entry name" value="TPP_PYR_DXS_TK_like"/>
    <property type="match status" value="1"/>
</dbReference>
<dbReference type="FunFam" id="3.40.50.920:FF:000002">
    <property type="entry name" value="1-deoxy-D-xylulose-5-phosphate synthase"/>
    <property type="match status" value="1"/>
</dbReference>
<dbReference type="FunFam" id="3.40.50.970:FF:000005">
    <property type="entry name" value="1-deoxy-D-xylulose-5-phosphate synthase"/>
    <property type="match status" value="1"/>
</dbReference>
<dbReference type="Gene3D" id="3.40.50.920">
    <property type="match status" value="1"/>
</dbReference>
<dbReference type="Gene3D" id="3.40.50.970">
    <property type="match status" value="2"/>
</dbReference>
<dbReference type="HAMAP" id="MF_00315">
    <property type="entry name" value="DXP_synth"/>
    <property type="match status" value="1"/>
</dbReference>
<dbReference type="InterPro" id="IPR005477">
    <property type="entry name" value="Dxylulose-5-P_synthase"/>
</dbReference>
<dbReference type="InterPro" id="IPR029061">
    <property type="entry name" value="THDP-binding"/>
</dbReference>
<dbReference type="InterPro" id="IPR009014">
    <property type="entry name" value="Transketo_C/PFOR_II"/>
</dbReference>
<dbReference type="InterPro" id="IPR005475">
    <property type="entry name" value="Transketolase-like_Pyr-bd"/>
</dbReference>
<dbReference type="InterPro" id="IPR020826">
    <property type="entry name" value="Transketolase_BS"/>
</dbReference>
<dbReference type="InterPro" id="IPR033248">
    <property type="entry name" value="Transketolase_C"/>
</dbReference>
<dbReference type="InterPro" id="IPR049557">
    <property type="entry name" value="Transketolase_CS"/>
</dbReference>
<dbReference type="NCBIfam" id="TIGR00204">
    <property type="entry name" value="dxs"/>
    <property type="match status" value="1"/>
</dbReference>
<dbReference type="NCBIfam" id="NF003933">
    <property type="entry name" value="PRK05444.2-2"/>
    <property type="match status" value="1"/>
</dbReference>
<dbReference type="PANTHER" id="PTHR43322">
    <property type="entry name" value="1-D-DEOXYXYLULOSE 5-PHOSPHATE SYNTHASE-RELATED"/>
    <property type="match status" value="1"/>
</dbReference>
<dbReference type="PANTHER" id="PTHR43322:SF5">
    <property type="entry name" value="1-DEOXY-D-XYLULOSE-5-PHOSPHATE SYNTHASE, CHLOROPLASTIC"/>
    <property type="match status" value="1"/>
</dbReference>
<dbReference type="Pfam" id="PF13292">
    <property type="entry name" value="DXP_synthase_N"/>
    <property type="match status" value="1"/>
</dbReference>
<dbReference type="Pfam" id="PF02779">
    <property type="entry name" value="Transket_pyr"/>
    <property type="match status" value="1"/>
</dbReference>
<dbReference type="Pfam" id="PF02780">
    <property type="entry name" value="Transketolase_C"/>
    <property type="match status" value="1"/>
</dbReference>
<dbReference type="SMART" id="SM00861">
    <property type="entry name" value="Transket_pyr"/>
    <property type="match status" value="1"/>
</dbReference>
<dbReference type="SUPFAM" id="SSF52518">
    <property type="entry name" value="Thiamin diphosphate-binding fold (THDP-binding)"/>
    <property type="match status" value="2"/>
</dbReference>
<dbReference type="SUPFAM" id="SSF52922">
    <property type="entry name" value="TK C-terminal domain-like"/>
    <property type="match status" value="1"/>
</dbReference>
<dbReference type="PROSITE" id="PS00801">
    <property type="entry name" value="TRANSKETOLASE_1"/>
    <property type="match status" value="1"/>
</dbReference>
<dbReference type="PROSITE" id="PS00802">
    <property type="entry name" value="TRANSKETOLASE_2"/>
    <property type="match status" value="1"/>
</dbReference>
<keyword id="KW-0414">Isoprene biosynthesis</keyword>
<keyword id="KW-0460">Magnesium</keyword>
<keyword id="KW-0479">Metal-binding</keyword>
<keyword id="KW-1185">Reference proteome</keyword>
<keyword id="KW-0784">Thiamine biosynthesis</keyword>
<keyword id="KW-0786">Thiamine pyrophosphate</keyword>
<keyword id="KW-0808">Transferase</keyword>
<name>DXS_HAEIN</name>